<evidence type="ECO:0000250" key="1">
    <source>
        <dbReference type="UniProtKB" id="C1IBY4"/>
    </source>
</evidence>
<evidence type="ECO:0000255" key="2"/>
<evidence type="ECO:0000255" key="3">
    <source>
        <dbReference type="PROSITE-ProRule" id="PRU00031"/>
    </source>
</evidence>
<evidence type="ECO:0000303" key="4">
    <source>
    </source>
</evidence>
<evidence type="ECO:0000305" key="5">
    <source>
    </source>
</evidence>
<evidence type="ECO:0000312" key="6">
    <source>
        <dbReference type="EMBL" id="ACS72291.1"/>
    </source>
</evidence>
<dbReference type="EMBL" id="FJ469603">
    <property type="protein sequence ID" value="ACS72291.1"/>
    <property type="molecule type" value="mRNA"/>
</dbReference>
<dbReference type="SMR" id="C8YJ96"/>
<dbReference type="GO" id="GO:0005615">
    <property type="term" value="C:extracellular space"/>
    <property type="evidence" value="ECO:0007669"/>
    <property type="project" value="TreeGrafter"/>
</dbReference>
<dbReference type="GO" id="GO:0004867">
    <property type="term" value="F:serine-type endopeptidase inhibitor activity"/>
    <property type="evidence" value="ECO:0007669"/>
    <property type="project" value="UniProtKB-KW"/>
</dbReference>
<dbReference type="GO" id="GO:0090729">
    <property type="term" value="F:toxin activity"/>
    <property type="evidence" value="ECO:0007669"/>
    <property type="project" value="UniProtKB-KW"/>
</dbReference>
<dbReference type="CDD" id="cd00109">
    <property type="entry name" value="Kunitz-type"/>
    <property type="match status" value="1"/>
</dbReference>
<dbReference type="FunFam" id="4.10.410.10:FF:000020">
    <property type="entry name" value="Collagen, type VI, alpha 3"/>
    <property type="match status" value="1"/>
</dbReference>
<dbReference type="Gene3D" id="4.10.410.10">
    <property type="entry name" value="Pancreatic trypsin inhibitor Kunitz domain"/>
    <property type="match status" value="1"/>
</dbReference>
<dbReference type="InterPro" id="IPR002223">
    <property type="entry name" value="Kunitz_BPTI"/>
</dbReference>
<dbReference type="InterPro" id="IPR036880">
    <property type="entry name" value="Kunitz_BPTI_sf"/>
</dbReference>
<dbReference type="InterPro" id="IPR020901">
    <property type="entry name" value="Prtase_inh_Kunz-CS"/>
</dbReference>
<dbReference type="InterPro" id="IPR050098">
    <property type="entry name" value="TFPI/VKTCI-like"/>
</dbReference>
<dbReference type="PANTHER" id="PTHR10083">
    <property type="entry name" value="KUNITZ-TYPE PROTEASE INHIBITOR-RELATED"/>
    <property type="match status" value="1"/>
</dbReference>
<dbReference type="PANTHER" id="PTHR10083:SF376">
    <property type="entry name" value="SERINE PEPTIDASE INHIBITOR, KUNITZ TYPE, 3"/>
    <property type="match status" value="1"/>
</dbReference>
<dbReference type="Pfam" id="PF00014">
    <property type="entry name" value="Kunitz_BPTI"/>
    <property type="match status" value="1"/>
</dbReference>
<dbReference type="PRINTS" id="PR00759">
    <property type="entry name" value="BASICPTASE"/>
</dbReference>
<dbReference type="SMART" id="SM00131">
    <property type="entry name" value="KU"/>
    <property type="match status" value="1"/>
</dbReference>
<dbReference type="SUPFAM" id="SSF57362">
    <property type="entry name" value="BPTI-like"/>
    <property type="match status" value="1"/>
</dbReference>
<dbReference type="PROSITE" id="PS00280">
    <property type="entry name" value="BPTI_KUNITZ_1"/>
    <property type="match status" value="1"/>
</dbReference>
<dbReference type="PROSITE" id="PS50279">
    <property type="entry name" value="BPTI_KUNITZ_2"/>
    <property type="match status" value="1"/>
</dbReference>
<proteinExistence type="inferred from homology"/>
<organism>
    <name type="scientific">Tabanus yao</name>
    <name type="common">Horsefly</name>
    <dbReference type="NCBI Taxonomy" id="485572"/>
    <lineage>
        <taxon>Eukaryota</taxon>
        <taxon>Metazoa</taxon>
        <taxon>Ecdysozoa</taxon>
        <taxon>Arthropoda</taxon>
        <taxon>Hexapoda</taxon>
        <taxon>Insecta</taxon>
        <taxon>Pterygota</taxon>
        <taxon>Neoptera</taxon>
        <taxon>Endopterygota</taxon>
        <taxon>Diptera</taxon>
        <taxon>Brachycera</taxon>
        <taxon>Tabanomorpha</taxon>
        <taxon>Tabanoidea</taxon>
        <taxon>Tabanidae</taxon>
        <taxon>Tabanus</taxon>
    </lineage>
</organism>
<feature type="signal peptide" evidence="2">
    <location>
        <begin position="1"/>
        <end position="20"/>
    </location>
</feature>
<feature type="chain" id="PRO_5002994495" description="Tabkunin 4">
    <location>
        <begin position="21"/>
        <end position="76"/>
    </location>
</feature>
<feature type="domain" description="BPTI/Kunitz inhibitor" evidence="3">
    <location>
        <begin position="25"/>
        <end position="75"/>
    </location>
</feature>
<feature type="disulfide bond" evidence="3">
    <location>
        <begin position="25"/>
        <end position="75"/>
    </location>
</feature>
<feature type="disulfide bond" evidence="3">
    <location>
        <begin position="34"/>
        <end position="58"/>
    </location>
</feature>
<protein>
    <recommendedName>
        <fullName evidence="4">Tabkunin 4</fullName>
    </recommendedName>
    <alternativeName>
        <fullName evidence="6">Serine protease inhibitor 4</fullName>
    </alternativeName>
</protein>
<sequence length="76" mass="8231">MKVLSLIFVIFSVLVLFASAKDPVCDQPKAVGRCFAAFPKFYFNSSSAQGEAFFYGGCGGNENNFNTLEECNAKCA</sequence>
<comment type="function">
    <text evidence="1">Potent anticoagulant protein that inhibits the hydrolytic activities of all serine proteases tested (trypsin, thrombin, elastase, and chymotrypsin), with the highest efficacy on thrombin.</text>
</comment>
<comment type="subcellular location">
    <subcellularLocation>
        <location evidence="5">Secreted</location>
    </subcellularLocation>
</comment>
<comment type="tissue specificity">
    <text evidence="5">Expressed in salivary glands.</text>
</comment>
<keyword id="KW-1203">Blood coagulation cascade inhibiting toxin</keyword>
<keyword id="KW-1015">Disulfide bond</keyword>
<keyword id="KW-1199">Hemostasis impairing toxin</keyword>
<keyword id="KW-0646">Protease inhibitor</keyword>
<keyword id="KW-0964">Secreted</keyword>
<keyword id="KW-0722">Serine protease inhibitor</keyword>
<keyword id="KW-0732">Signal</keyword>
<keyword id="KW-0800">Toxin</keyword>
<reference evidence="6" key="1">
    <citation type="journal article" date="2009" name="Mol. Cell. Proteomics">
        <title>Anti-thrombosis repertoire of blood-feeding horsefly salivary glands.</title>
        <authorList>
            <person name="Ma D."/>
            <person name="Wang Y."/>
            <person name="Yang H."/>
            <person name="Wu J."/>
            <person name="An S."/>
            <person name="Gao L."/>
            <person name="Xu X."/>
            <person name="Lai R."/>
        </authorList>
    </citation>
    <scope>NUCLEOTIDE SEQUENCE [MRNA]</scope>
    <source>
        <tissue>Salivary gland</tissue>
    </source>
</reference>
<name>KUN4_TABYA</name>
<accession>C8YJ96</accession>